<name>MYO1_ASPOR</name>
<organism>
    <name type="scientific">Aspergillus oryzae (strain ATCC 42149 / RIB 40)</name>
    <name type="common">Yellow koji mold</name>
    <dbReference type="NCBI Taxonomy" id="510516"/>
    <lineage>
        <taxon>Eukaryota</taxon>
        <taxon>Fungi</taxon>
        <taxon>Dikarya</taxon>
        <taxon>Ascomycota</taxon>
        <taxon>Pezizomycotina</taxon>
        <taxon>Eurotiomycetes</taxon>
        <taxon>Eurotiomycetidae</taxon>
        <taxon>Eurotiales</taxon>
        <taxon>Aspergillaceae</taxon>
        <taxon>Aspergillus</taxon>
        <taxon>Aspergillus subgen. Circumdati</taxon>
    </lineage>
</organism>
<comment type="function">
    <text evidence="1">Type-I myosin implicated in the organization of the actin cytoskeleton. Required for proper actin cytoskeleton polarization. At the cell cortex, assembles in patch-like structures together with proteins from the actin-polymerizing machinery and promotes actin assembly. Functions as actin nucleation-promoting factor (NPF) for the Arp2/3 complex. Plays an important role in polarized growth, spore germination, hyphal morphogenesis, and septal wall formation (By similarity).</text>
</comment>
<comment type="subcellular location">
    <subcellularLocation>
        <location evidence="1">Cytoplasm</location>
        <location evidence="1">Cytoskeleton</location>
        <location evidence="1">Actin patch</location>
    </subcellularLocation>
    <text evidence="1">Localizes to cortical patch-like structures. Enriched at sites of polarized growth, like the growing hyphal tips and sites of septum formation (By similarity).</text>
</comment>
<comment type="domain">
    <text evidence="1">The myosin motor domain displays actin-stimulated ATPase activity and generates a mechanochemical force.</text>
</comment>
<comment type="domain">
    <text evidence="1">The tail domain participates in molecular interactions that specify the role of the motor domain (By similarity). It is composed of several tail homology (TH) domains, namely a putative phospholipid-binding myosin tail domain (also named TH1), an Ala- and Pro-rich domain (TH2), followed by an SH3 domain and a C-terminal acidic domain (TH3).</text>
</comment>
<comment type="PTM">
    <text evidence="1">Phosphorylation of the TEDS site (Ser-370) is required for the polarization of the actin cytoskeleton. Phosphorylation probably activates the myosin-I ATPase activity (By similarity).</text>
</comment>
<comment type="similarity">
    <text evidence="7">Belongs to the TRAFAC class myosin-kinesin ATPase superfamily. Myosin family.</text>
</comment>
<feature type="chain" id="PRO_0000338540" description="Myosin-1">
    <location>
        <begin position="1"/>
        <end position="1261"/>
    </location>
</feature>
<feature type="domain" description="Myosin motor" evidence="4">
    <location>
        <begin position="49"/>
        <end position="728"/>
    </location>
</feature>
<feature type="domain" description="IQ 1">
    <location>
        <begin position="732"/>
        <end position="752"/>
    </location>
</feature>
<feature type="domain" description="IQ 2">
    <location>
        <begin position="753"/>
        <end position="778"/>
    </location>
</feature>
<feature type="domain" description="TH1" evidence="5">
    <location>
        <begin position="786"/>
        <end position="973"/>
    </location>
</feature>
<feature type="domain" description="SH3" evidence="3">
    <location>
        <begin position="1084"/>
        <end position="1145"/>
    </location>
</feature>
<feature type="region of interest" description="Disordered" evidence="6">
    <location>
        <begin position="1"/>
        <end position="39"/>
    </location>
</feature>
<feature type="region of interest" description="Actin-binding" evidence="1">
    <location>
        <begin position="417"/>
        <end position="499"/>
    </location>
</feature>
<feature type="region of interest" description="Disordered" evidence="6">
    <location>
        <begin position="956"/>
        <end position="1093"/>
    </location>
</feature>
<feature type="region of interest" description="Disordered" evidence="6">
    <location>
        <begin position="1139"/>
        <end position="1261"/>
    </location>
</feature>
<feature type="compositionally biased region" description="Pro residues" evidence="6">
    <location>
        <begin position="1019"/>
        <end position="1029"/>
    </location>
</feature>
<feature type="compositionally biased region" description="Pro residues" evidence="6">
    <location>
        <begin position="1038"/>
        <end position="1052"/>
    </location>
</feature>
<feature type="compositionally biased region" description="Pro residues" evidence="6">
    <location>
        <begin position="1072"/>
        <end position="1084"/>
    </location>
</feature>
<feature type="compositionally biased region" description="Pro residues" evidence="6">
    <location>
        <begin position="1147"/>
        <end position="1159"/>
    </location>
</feature>
<feature type="compositionally biased region" description="Low complexity" evidence="6">
    <location>
        <begin position="1160"/>
        <end position="1181"/>
    </location>
</feature>
<feature type="compositionally biased region" description="Polar residues" evidence="6">
    <location>
        <begin position="1212"/>
        <end position="1233"/>
    </location>
</feature>
<feature type="compositionally biased region" description="Low complexity" evidence="6">
    <location>
        <begin position="1234"/>
        <end position="1243"/>
    </location>
</feature>
<feature type="binding site" evidence="2">
    <location>
        <begin position="142"/>
        <end position="149"/>
    </location>
    <ligand>
        <name>ATP</name>
        <dbReference type="ChEBI" id="CHEBI:30616"/>
    </ligand>
</feature>
<feature type="modified residue" description="Phosphoserine" evidence="1">
    <location>
        <position position="370"/>
    </location>
</feature>
<gene>
    <name type="primary">myoA</name>
    <name type="ORF">AO090005000576</name>
</gene>
<evidence type="ECO:0000250" key="1"/>
<evidence type="ECO:0000255" key="2"/>
<evidence type="ECO:0000255" key="3">
    <source>
        <dbReference type="PROSITE-ProRule" id="PRU00192"/>
    </source>
</evidence>
<evidence type="ECO:0000255" key="4">
    <source>
        <dbReference type="PROSITE-ProRule" id="PRU00782"/>
    </source>
</evidence>
<evidence type="ECO:0000255" key="5">
    <source>
        <dbReference type="PROSITE-ProRule" id="PRU01093"/>
    </source>
</evidence>
<evidence type="ECO:0000256" key="6">
    <source>
        <dbReference type="SAM" id="MobiDB-lite"/>
    </source>
</evidence>
<evidence type="ECO:0000305" key="7"/>
<proteinExistence type="inferred from homology"/>
<sequence length="1261" mass="138361">MGHSRRPVGGEKKSRGFGRSKVADVGDGRQAGKPQVKKATFETTKKKDIGVSDLTLLSKISNEAINDNLKLRFEHDEIYTYIGHVLVSVNPFRDLGIYTDNVLDSYRGKNRLEVPPHVFAVAESSYYNMKSYKDNQCVIISGESGAGKTEAAKRIMQYIASVSGGSDSSIQQTKDMVLATNPLLESFGNAKTLRNNNSSRFGKYLELEFNANGEPVGANITNYLLEKSRVVGQIANERNFHIFYQFTKAAPQKYRDMFGVQQPQSYLYTSRSKCFDVPGVDDNAEFRDTLNAMGVIGMSEAEQDNVFRMLAAILWIGNVQFAEDDSGNAAISDQSVVDFVAYLLEVDPAQVNKALTIRIMETARGGRRGSVYEVPLNTVQALAVRDALSKAIYFNLFDWIVERVNQSLTAREPVANSIGILDIYGFEIFEKNSFEQLCINYVNEKLQQIFIQLTLKAEQDEYAREQIQWTPIKYFDNKVVCSLIEDKRPPGVFAALNDACATAHADSGAADNTFVGRLNFLGQNPNFENRQGQFIVKHYAGDVSYSVEGMTDKNKDQLLKDLLNLVGSSGNQFVHTLFPNQVNQDDKRRPPTASDKIKASANDLVATLMKAQPSYIRTIKPNDNKAPREYNVGNVLHQIKYLGLQENVRIRRAGFAYRQTFNKFVERFYLLSPKTSYAGDYTWTGDAESGARQILKDTSIPAEEYQMGITKVFVKTPETLFALEAMRDRYWHNMAIRIQRAWRNYLRYRIECAIRIQRFWRRTTGGLELLKVRDQGHQVLQGRKERRRMSLLGSRRFLGDYLGIGNKGGPGEMIRNGAGISGSDDILFSCRGEVLISKFGRSSKPSPRILVLTNRHVYIVAQILVNNQLQISAERTVPIGAIKAVSTSNLKDDWFSLIIGGQEPDPLINCVFKTEFFTHLQTALRGQLNLKVSENIEYNKKPGKLATVKAIKDPAASPNVDTYKSHTIHTSPGEPPSSVSKPTPKAKQVAARPVTKGKLLRPGGPGGGPSKLASRPASRPTPKPQPLPQSQPATAQPIPAPQPAAVPRPVPQPVAAAAASHTRNASSGSVRAPPPPPPASPPAPKKATAKALYDFTSAQSNELDIRAGDVVQIVSKEGNGWWLCMNMATSVQGWTPQAYLEEQVAPTPKPAPPPPPPAAPRASPVPSANGAAATAAAAKAKPAPPAPPAKRPNMAGRKAVPAPPPAPRDSAVSMNSQDSSGGSGRGTPNSTSNASLAGGLAEALRARQHAMQGKHDDDDEW</sequence>
<dbReference type="EMBL" id="BA000049">
    <property type="protein sequence ID" value="BAE55620.1"/>
    <property type="molecule type" value="Genomic_DNA"/>
</dbReference>
<dbReference type="RefSeq" id="XP_001817622.1">
    <property type="nucleotide sequence ID" value="XM_001817570.2"/>
</dbReference>
<dbReference type="SMR" id="Q2US45"/>
<dbReference type="STRING" id="510516.Q2US45"/>
<dbReference type="EnsemblFungi" id="BAE55620">
    <property type="protein sequence ID" value="BAE55620"/>
    <property type="gene ID" value="AO090005000576"/>
</dbReference>
<dbReference type="GeneID" id="5989567"/>
<dbReference type="KEGG" id="aor:AO090005000576"/>
<dbReference type="VEuPathDB" id="FungiDB:AO090005000576"/>
<dbReference type="HOGENOM" id="CLU_000192_7_6_1"/>
<dbReference type="OMA" id="NDQENQC"/>
<dbReference type="OrthoDB" id="107365at5052"/>
<dbReference type="Proteomes" id="UP000006564">
    <property type="component" value="Chromosome 1"/>
</dbReference>
<dbReference type="GO" id="GO:0030479">
    <property type="term" value="C:actin cortical patch"/>
    <property type="evidence" value="ECO:0000314"/>
    <property type="project" value="AspGD"/>
</dbReference>
<dbReference type="GO" id="GO:0051285">
    <property type="term" value="C:cell cortex of cell tip"/>
    <property type="evidence" value="ECO:0007669"/>
    <property type="project" value="EnsemblFungi"/>
</dbReference>
<dbReference type="GO" id="GO:0030428">
    <property type="term" value="C:cell septum"/>
    <property type="evidence" value="ECO:0000314"/>
    <property type="project" value="AspGD"/>
</dbReference>
<dbReference type="GO" id="GO:0001411">
    <property type="term" value="C:hyphal tip"/>
    <property type="evidence" value="ECO:0000314"/>
    <property type="project" value="AspGD"/>
</dbReference>
<dbReference type="GO" id="GO:0043332">
    <property type="term" value="C:mating projection tip"/>
    <property type="evidence" value="ECO:0007669"/>
    <property type="project" value="EnsemblFungi"/>
</dbReference>
<dbReference type="GO" id="GO:0031097">
    <property type="term" value="C:medial cortex"/>
    <property type="evidence" value="ECO:0007669"/>
    <property type="project" value="EnsemblFungi"/>
</dbReference>
<dbReference type="GO" id="GO:0045160">
    <property type="term" value="C:myosin I complex"/>
    <property type="evidence" value="ECO:0007669"/>
    <property type="project" value="EnsemblFungi"/>
</dbReference>
<dbReference type="GO" id="GO:0005886">
    <property type="term" value="C:plasma membrane"/>
    <property type="evidence" value="ECO:0000314"/>
    <property type="project" value="AspGD"/>
</dbReference>
<dbReference type="GO" id="GO:0044853">
    <property type="term" value="C:plasma membrane raft"/>
    <property type="evidence" value="ECO:0007669"/>
    <property type="project" value="EnsemblFungi"/>
</dbReference>
<dbReference type="GO" id="GO:0005628">
    <property type="term" value="C:prospore membrane"/>
    <property type="evidence" value="ECO:0007669"/>
    <property type="project" value="EnsemblFungi"/>
</dbReference>
<dbReference type="GO" id="GO:0051015">
    <property type="term" value="F:actin filament binding"/>
    <property type="evidence" value="ECO:0007669"/>
    <property type="project" value="EnsemblFungi"/>
</dbReference>
<dbReference type="GO" id="GO:0071933">
    <property type="term" value="F:Arp2/3 complex binding"/>
    <property type="evidence" value="ECO:0007669"/>
    <property type="project" value="EnsemblFungi"/>
</dbReference>
<dbReference type="GO" id="GO:0005524">
    <property type="term" value="F:ATP binding"/>
    <property type="evidence" value="ECO:0007669"/>
    <property type="project" value="UniProtKB-KW"/>
</dbReference>
<dbReference type="GO" id="GO:0016787">
    <property type="term" value="F:hydrolase activity"/>
    <property type="evidence" value="ECO:0007669"/>
    <property type="project" value="UniProtKB-KW"/>
</dbReference>
<dbReference type="GO" id="GO:0000146">
    <property type="term" value="F:microfilament motor activity"/>
    <property type="evidence" value="ECO:0007669"/>
    <property type="project" value="EnsemblFungi"/>
</dbReference>
<dbReference type="GO" id="GO:0000147">
    <property type="term" value="P:actin cortical patch assembly"/>
    <property type="evidence" value="ECO:0007669"/>
    <property type="project" value="EnsemblFungi"/>
</dbReference>
<dbReference type="GO" id="GO:0051666">
    <property type="term" value="P:actin cortical patch localization"/>
    <property type="evidence" value="ECO:0007669"/>
    <property type="project" value="TreeGrafter"/>
</dbReference>
<dbReference type="GO" id="GO:0007015">
    <property type="term" value="P:actin filament organization"/>
    <property type="evidence" value="ECO:0007669"/>
    <property type="project" value="TreeGrafter"/>
</dbReference>
<dbReference type="GO" id="GO:0000281">
    <property type="term" value="P:mitotic cytokinesis"/>
    <property type="evidence" value="ECO:0007669"/>
    <property type="project" value="EnsemblFungi"/>
</dbReference>
<dbReference type="GO" id="GO:0006898">
    <property type="term" value="P:receptor-mediated endocytosis"/>
    <property type="evidence" value="ECO:0000315"/>
    <property type="project" value="AspGD"/>
</dbReference>
<dbReference type="CDD" id="cd01378">
    <property type="entry name" value="MYSc_Myo1"/>
    <property type="match status" value="1"/>
</dbReference>
<dbReference type="CDD" id="cd11858">
    <property type="entry name" value="SH3_Myosin-I_fungi"/>
    <property type="match status" value="1"/>
</dbReference>
<dbReference type="FunFam" id="1.10.10.820:FF:000001">
    <property type="entry name" value="Myosin heavy chain"/>
    <property type="match status" value="1"/>
</dbReference>
<dbReference type="FunFam" id="1.20.120.720:FF:000015">
    <property type="entry name" value="Myosin I"/>
    <property type="match status" value="1"/>
</dbReference>
<dbReference type="FunFam" id="2.30.30.40:FF:000254">
    <property type="entry name" value="Myosin I MyoA/Myo5"/>
    <property type="match status" value="1"/>
</dbReference>
<dbReference type="FunFam" id="1.20.5.4820:FF:000004">
    <property type="entry name" value="Myosin IE"/>
    <property type="match status" value="1"/>
</dbReference>
<dbReference type="FunFam" id="1.20.58.530:FF:000007">
    <property type="entry name" value="Myosin IE"/>
    <property type="match status" value="1"/>
</dbReference>
<dbReference type="Gene3D" id="1.10.10.820">
    <property type="match status" value="1"/>
</dbReference>
<dbReference type="Gene3D" id="1.20.5.4820">
    <property type="match status" value="1"/>
</dbReference>
<dbReference type="Gene3D" id="1.20.58.530">
    <property type="match status" value="1"/>
</dbReference>
<dbReference type="Gene3D" id="3.40.850.10">
    <property type="entry name" value="Kinesin motor domain"/>
    <property type="match status" value="1"/>
</dbReference>
<dbReference type="Gene3D" id="1.20.120.720">
    <property type="entry name" value="Myosin VI head, motor domain, U50 subdomain"/>
    <property type="match status" value="1"/>
</dbReference>
<dbReference type="Gene3D" id="2.30.30.40">
    <property type="entry name" value="SH3 Domains"/>
    <property type="match status" value="1"/>
</dbReference>
<dbReference type="InterPro" id="IPR035535">
    <property type="entry name" value="Fungal_myosin-I_SH3"/>
</dbReference>
<dbReference type="InterPro" id="IPR036961">
    <property type="entry name" value="Kinesin_motor_dom_sf"/>
</dbReference>
<dbReference type="InterPro" id="IPR054489">
    <property type="entry name" value="Myo1_CA"/>
</dbReference>
<dbReference type="InterPro" id="IPR001609">
    <property type="entry name" value="Myosin_head_motor_dom-like"/>
</dbReference>
<dbReference type="InterPro" id="IPR010926">
    <property type="entry name" value="Myosin_TH1"/>
</dbReference>
<dbReference type="InterPro" id="IPR036072">
    <property type="entry name" value="MYSc_Myo1"/>
</dbReference>
<dbReference type="InterPro" id="IPR027417">
    <property type="entry name" value="P-loop_NTPase"/>
</dbReference>
<dbReference type="InterPro" id="IPR036028">
    <property type="entry name" value="SH3-like_dom_sf"/>
</dbReference>
<dbReference type="InterPro" id="IPR001452">
    <property type="entry name" value="SH3_domain"/>
</dbReference>
<dbReference type="PANTHER" id="PTHR13140">
    <property type="entry name" value="MYOSIN"/>
    <property type="match status" value="1"/>
</dbReference>
<dbReference type="PANTHER" id="PTHR13140:SF837">
    <property type="entry name" value="MYOSIN-3-RELATED"/>
    <property type="match status" value="1"/>
</dbReference>
<dbReference type="Pfam" id="PF22773">
    <property type="entry name" value="Myo1_CA"/>
    <property type="match status" value="1"/>
</dbReference>
<dbReference type="Pfam" id="PF00063">
    <property type="entry name" value="Myosin_head"/>
    <property type="match status" value="1"/>
</dbReference>
<dbReference type="Pfam" id="PF06017">
    <property type="entry name" value="Myosin_TH1"/>
    <property type="match status" value="1"/>
</dbReference>
<dbReference type="Pfam" id="PF00018">
    <property type="entry name" value="SH3_1"/>
    <property type="match status" value="1"/>
</dbReference>
<dbReference type="PRINTS" id="PR00193">
    <property type="entry name" value="MYOSINHEAVY"/>
</dbReference>
<dbReference type="SMART" id="SM00242">
    <property type="entry name" value="MYSc"/>
    <property type="match status" value="1"/>
</dbReference>
<dbReference type="SMART" id="SM00326">
    <property type="entry name" value="SH3"/>
    <property type="match status" value="1"/>
</dbReference>
<dbReference type="SUPFAM" id="SSF52540">
    <property type="entry name" value="P-loop containing nucleoside triphosphate hydrolases"/>
    <property type="match status" value="1"/>
</dbReference>
<dbReference type="SUPFAM" id="SSF50044">
    <property type="entry name" value="SH3-domain"/>
    <property type="match status" value="1"/>
</dbReference>
<dbReference type="PROSITE" id="PS51456">
    <property type="entry name" value="MYOSIN_MOTOR"/>
    <property type="match status" value="1"/>
</dbReference>
<dbReference type="PROSITE" id="PS50002">
    <property type="entry name" value="SH3"/>
    <property type="match status" value="1"/>
</dbReference>
<dbReference type="PROSITE" id="PS51757">
    <property type="entry name" value="TH1"/>
    <property type="match status" value="1"/>
</dbReference>
<protein>
    <recommendedName>
        <fullName>Myosin-1</fullName>
    </recommendedName>
    <alternativeName>
        <fullName>Class I unconventional myosin</fullName>
    </alternativeName>
    <alternativeName>
        <fullName>Type I myosin</fullName>
    </alternativeName>
</protein>
<reference key="1">
    <citation type="journal article" date="2005" name="Nature">
        <title>Genome sequencing and analysis of Aspergillus oryzae.</title>
        <authorList>
            <person name="Machida M."/>
            <person name="Asai K."/>
            <person name="Sano M."/>
            <person name="Tanaka T."/>
            <person name="Kumagai T."/>
            <person name="Terai G."/>
            <person name="Kusumoto K."/>
            <person name="Arima T."/>
            <person name="Akita O."/>
            <person name="Kashiwagi Y."/>
            <person name="Abe K."/>
            <person name="Gomi K."/>
            <person name="Horiuchi H."/>
            <person name="Kitamoto K."/>
            <person name="Kobayashi T."/>
            <person name="Takeuchi M."/>
            <person name="Denning D.W."/>
            <person name="Galagan J.E."/>
            <person name="Nierman W.C."/>
            <person name="Yu J."/>
            <person name="Archer D.B."/>
            <person name="Bennett J.W."/>
            <person name="Bhatnagar D."/>
            <person name="Cleveland T.E."/>
            <person name="Fedorova N.D."/>
            <person name="Gotoh O."/>
            <person name="Horikawa H."/>
            <person name="Hosoyama A."/>
            <person name="Ichinomiya M."/>
            <person name="Igarashi R."/>
            <person name="Iwashita K."/>
            <person name="Juvvadi P.R."/>
            <person name="Kato M."/>
            <person name="Kato Y."/>
            <person name="Kin T."/>
            <person name="Kokubun A."/>
            <person name="Maeda H."/>
            <person name="Maeyama N."/>
            <person name="Maruyama J."/>
            <person name="Nagasaki H."/>
            <person name="Nakajima T."/>
            <person name="Oda K."/>
            <person name="Okada K."/>
            <person name="Paulsen I."/>
            <person name="Sakamoto K."/>
            <person name="Sawano T."/>
            <person name="Takahashi M."/>
            <person name="Takase K."/>
            <person name="Terabayashi Y."/>
            <person name="Wortman J.R."/>
            <person name="Yamada O."/>
            <person name="Yamagata Y."/>
            <person name="Anazawa H."/>
            <person name="Hata Y."/>
            <person name="Koide Y."/>
            <person name="Komori T."/>
            <person name="Koyama Y."/>
            <person name="Minetoki T."/>
            <person name="Suharnan S."/>
            <person name="Tanaka A."/>
            <person name="Isono K."/>
            <person name="Kuhara S."/>
            <person name="Ogasawara N."/>
            <person name="Kikuchi H."/>
        </authorList>
    </citation>
    <scope>NUCLEOTIDE SEQUENCE [LARGE SCALE GENOMIC DNA]</scope>
    <source>
        <strain>ATCC 42149 / RIB 40</strain>
    </source>
</reference>
<accession>Q2US45</accession>
<keyword id="KW-0009">Actin-binding</keyword>
<keyword id="KW-0067">ATP-binding</keyword>
<keyword id="KW-0963">Cytoplasm</keyword>
<keyword id="KW-0206">Cytoskeleton</keyword>
<keyword id="KW-0378">Hydrolase</keyword>
<keyword id="KW-0505">Motor protein</keyword>
<keyword id="KW-0518">Myosin</keyword>
<keyword id="KW-0547">Nucleotide-binding</keyword>
<keyword id="KW-0597">Phosphoprotein</keyword>
<keyword id="KW-1185">Reference proteome</keyword>
<keyword id="KW-0677">Repeat</keyword>
<keyword id="KW-0728">SH3 domain</keyword>